<evidence type="ECO:0000255" key="1">
    <source>
        <dbReference type="HAMAP-Rule" id="MF_00316"/>
    </source>
</evidence>
<evidence type="ECO:0000305" key="2"/>
<name>MOBA_STACT</name>
<comment type="function">
    <text evidence="1">Transfers a GMP moiety from GTP to Mo-molybdopterin (Mo-MPT) cofactor (Moco or molybdenum cofactor) to form Mo-molybdopterin guanine dinucleotide (Mo-MGD) cofactor.</text>
</comment>
<comment type="catalytic activity">
    <reaction evidence="1">
        <text>Mo-molybdopterin + GTP + H(+) = Mo-molybdopterin guanine dinucleotide + diphosphate</text>
        <dbReference type="Rhea" id="RHEA:34243"/>
        <dbReference type="ChEBI" id="CHEBI:15378"/>
        <dbReference type="ChEBI" id="CHEBI:33019"/>
        <dbReference type="ChEBI" id="CHEBI:37565"/>
        <dbReference type="ChEBI" id="CHEBI:71302"/>
        <dbReference type="ChEBI" id="CHEBI:71310"/>
        <dbReference type="EC" id="2.7.7.77"/>
    </reaction>
</comment>
<comment type="cofactor">
    <cofactor evidence="1">
        <name>Mg(2+)</name>
        <dbReference type="ChEBI" id="CHEBI:18420"/>
    </cofactor>
</comment>
<comment type="subcellular location">
    <subcellularLocation>
        <location evidence="1">Cytoplasm</location>
    </subcellularLocation>
</comment>
<comment type="domain">
    <text evidence="1">The N-terminal domain determines nucleotide recognition and specific binding, while the C-terminal domain determines the specific binding to the target protein.</text>
</comment>
<comment type="similarity">
    <text evidence="1">Belongs to the MobA family.</text>
</comment>
<proteinExistence type="inferred from homology"/>
<accession>Q9ZIM7</accession>
<accession>B9DLY3</accession>
<reference key="1">
    <citation type="journal article" date="1998" name="FEMS Microbiol. Lett.">
        <title>Characterization of moeB- part of the molybdenum cofactor biosynthesis gene cluster in Staphylococcus carnosus.</title>
        <authorList>
            <person name="Neubauer H."/>
            <person name="Pantel I."/>
            <person name="Goetz F."/>
        </authorList>
    </citation>
    <scope>NUCLEOTIDE SEQUENCE [GENOMIC DNA]</scope>
</reference>
<reference key="2">
    <citation type="journal article" date="2009" name="Appl. Environ. Microbiol.">
        <title>Genome analysis of the meat starter culture bacterium Staphylococcus carnosus TM300.</title>
        <authorList>
            <person name="Rosenstein R."/>
            <person name="Nerz C."/>
            <person name="Biswas L."/>
            <person name="Resch A."/>
            <person name="Raddatz G."/>
            <person name="Schuster S.C."/>
            <person name="Goetz F."/>
        </authorList>
    </citation>
    <scope>NUCLEOTIDE SEQUENCE [LARGE SCALE GENOMIC DNA]</scope>
    <source>
        <strain>TM300</strain>
    </source>
</reference>
<organism>
    <name type="scientific">Staphylococcus carnosus (strain TM300)</name>
    <dbReference type="NCBI Taxonomy" id="396513"/>
    <lineage>
        <taxon>Bacteria</taxon>
        <taxon>Bacillati</taxon>
        <taxon>Bacillota</taxon>
        <taxon>Bacilli</taxon>
        <taxon>Bacillales</taxon>
        <taxon>Staphylococcaceae</taxon>
        <taxon>Staphylococcus</taxon>
    </lineage>
</organism>
<dbReference type="EC" id="2.7.7.77" evidence="1"/>
<dbReference type="EMBL" id="AF109295">
    <property type="protein sequence ID" value="AAC83143.1"/>
    <property type="molecule type" value="Genomic_DNA"/>
</dbReference>
<dbReference type="EMBL" id="AM295250">
    <property type="protein sequence ID" value="CAL28663.1"/>
    <property type="molecule type" value="Genomic_DNA"/>
</dbReference>
<dbReference type="RefSeq" id="WP_015900999.1">
    <property type="nucleotide sequence ID" value="NC_012121.1"/>
</dbReference>
<dbReference type="SMR" id="Q9ZIM7"/>
<dbReference type="GeneID" id="93794216"/>
<dbReference type="KEGG" id="sca:SCA_1757"/>
<dbReference type="eggNOG" id="COG0746">
    <property type="taxonomic scope" value="Bacteria"/>
</dbReference>
<dbReference type="HOGENOM" id="CLU_055597_2_0_9"/>
<dbReference type="OrthoDB" id="9788394at2"/>
<dbReference type="BioCyc" id="SCAR396513:SCA_RS08945-MONOMER"/>
<dbReference type="Proteomes" id="UP000000444">
    <property type="component" value="Chromosome"/>
</dbReference>
<dbReference type="GO" id="GO:0005737">
    <property type="term" value="C:cytoplasm"/>
    <property type="evidence" value="ECO:0007669"/>
    <property type="project" value="UniProtKB-SubCell"/>
</dbReference>
<dbReference type="GO" id="GO:0005525">
    <property type="term" value="F:GTP binding"/>
    <property type="evidence" value="ECO:0007669"/>
    <property type="project" value="UniProtKB-UniRule"/>
</dbReference>
<dbReference type="GO" id="GO:0046872">
    <property type="term" value="F:metal ion binding"/>
    <property type="evidence" value="ECO:0007669"/>
    <property type="project" value="UniProtKB-KW"/>
</dbReference>
<dbReference type="GO" id="GO:0061603">
    <property type="term" value="F:molybdenum cofactor guanylyltransferase activity"/>
    <property type="evidence" value="ECO:0007669"/>
    <property type="project" value="UniProtKB-EC"/>
</dbReference>
<dbReference type="GO" id="GO:0006777">
    <property type="term" value="P:Mo-molybdopterin cofactor biosynthetic process"/>
    <property type="evidence" value="ECO:0007669"/>
    <property type="project" value="UniProtKB-KW"/>
</dbReference>
<dbReference type="CDD" id="cd02503">
    <property type="entry name" value="MobA"/>
    <property type="match status" value="1"/>
</dbReference>
<dbReference type="Gene3D" id="3.90.550.10">
    <property type="entry name" value="Spore Coat Polysaccharide Biosynthesis Protein SpsA, Chain A"/>
    <property type="match status" value="1"/>
</dbReference>
<dbReference type="HAMAP" id="MF_00316">
    <property type="entry name" value="MobA"/>
    <property type="match status" value="1"/>
</dbReference>
<dbReference type="InterPro" id="IPR025877">
    <property type="entry name" value="MobA-like_NTP_Trfase"/>
</dbReference>
<dbReference type="InterPro" id="IPR013482">
    <property type="entry name" value="Molybde_CF_guanTrfase"/>
</dbReference>
<dbReference type="InterPro" id="IPR029044">
    <property type="entry name" value="Nucleotide-diphossugar_trans"/>
</dbReference>
<dbReference type="NCBIfam" id="NF001457">
    <property type="entry name" value="PRK00317.1-3"/>
    <property type="match status" value="1"/>
</dbReference>
<dbReference type="PANTHER" id="PTHR19136">
    <property type="entry name" value="MOLYBDENUM COFACTOR GUANYLYLTRANSFERASE"/>
    <property type="match status" value="1"/>
</dbReference>
<dbReference type="PANTHER" id="PTHR19136:SF81">
    <property type="entry name" value="MOLYBDENUM COFACTOR GUANYLYLTRANSFERASE"/>
    <property type="match status" value="1"/>
</dbReference>
<dbReference type="Pfam" id="PF12804">
    <property type="entry name" value="NTP_transf_3"/>
    <property type="match status" value="1"/>
</dbReference>
<dbReference type="SUPFAM" id="SSF53448">
    <property type="entry name" value="Nucleotide-diphospho-sugar transferases"/>
    <property type="match status" value="1"/>
</dbReference>
<protein>
    <recommendedName>
        <fullName evidence="1">Probable molybdenum cofactor guanylyltransferase</fullName>
        <shortName evidence="1">MoCo guanylyltransferase</shortName>
        <ecNumber evidence="1">2.7.7.77</ecNumber>
    </recommendedName>
    <alternativeName>
        <fullName evidence="1">GTP:molybdopterin guanylyltransferase</fullName>
    </alternativeName>
    <alternativeName>
        <fullName evidence="1">Mo-MPT guanylyltransferase</fullName>
    </alternativeName>
    <alternativeName>
        <fullName evidence="1">Molybdopterin guanylyltransferase</fullName>
    </alternativeName>
    <alternativeName>
        <fullName evidence="1">Molybdopterin-guanine dinucleotide synthase</fullName>
        <shortName evidence="1">MGD synthase</shortName>
    </alternativeName>
</protein>
<gene>
    <name evidence="1" type="primary">mobA</name>
    <name type="ordered locus">Sca_1757</name>
</gene>
<sequence>MKAIILAGGQSERFGAPKAFAEIDGKMFYEQIITVLDSMNMFNEIIISSNETLASEFKGARVIVDDSEHKNKGPLSGIYSVMKQDFESELFFVISVDTPLITAKAISQLYQFMVEHVIEDQLDIAGFKEGNHPIPTIAFYSPNCLPIIARALESDDYSMRHVYQQTASDWIDVSSVDDDTEWYKNINYPQDLESIKK</sequence>
<keyword id="KW-0963">Cytoplasm</keyword>
<keyword id="KW-0342">GTP-binding</keyword>
<keyword id="KW-0460">Magnesium</keyword>
<keyword id="KW-0479">Metal-binding</keyword>
<keyword id="KW-0501">Molybdenum cofactor biosynthesis</keyword>
<keyword id="KW-0547">Nucleotide-binding</keyword>
<keyword id="KW-1185">Reference proteome</keyword>
<keyword id="KW-0808">Transferase</keyword>
<feature type="chain" id="PRO_0000134917" description="Probable molybdenum cofactor guanylyltransferase">
    <location>
        <begin position="1"/>
        <end position="197"/>
    </location>
</feature>
<feature type="binding site" evidence="1">
    <location>
        <begin position="6"/>
        <end position="8"/>
    </location>
    <ligand>
        <name>GTP</name>
        <dbReference type="ChEBI" id="CHEBI:37565"/>
    </ligand>
</feature>
<feature type="binding site" evidence="1">
    <location>
        <position position="18"/>
    </location>
    <ligand>
        <name>GTP</name>
        <dbReference type="ChEBI" id="CHEBI:37565"/>
    </ligand>
</feature>
<feature type="binding site" evidence="1">
    <location>
        <position position="65"/>
    </location>
    <ligand>
        <name>GTP</name>
        <dbReference type="ChEBI" id="CHEBI:37565"/>
    </ligand>
</feature>
<feature type="binding site" evidence="1">
    <location>
        <position position="97"/>
    </location>
    <ligand>
        <name>GTP</name>
        <dbReference type="ChEBI" id="CHEBI:37565"/>
    </ligand>
</feature>
<feature type="binding site" evidence="1">
    <location>
        <position position="97"/>
    </location>
    <ligand>
        <name>Mg(2+)</name>
        <dbReference type="ChEBI" id="CHEBI:18420"/>
    </ligand>
</feature>
<feature type="sequence conflict" description="In Ref. 1; AAC83143." evidence="2" ref="1">
    <original>FESELFFVISVDTPLITA</original>
    <variation>LNQNYFCDFCGYAAYYR</variation>
    <location>
        <begin position="86"/>
        <end position="103"/>
    </location>
</feature>